<organism>
    <name type="scientific">Maridesulfovibrio salexigens (strain ATCC 14822 / DSM 2638 / NCIMB 8403 / VKM B-1763)</name>
    <name type="common">Desulfovibrio salexigens</name>
    <dbReference type="NCBI Taxonomy" id="526222"/>
    <lineage>
        <taxon>Bacteria</taxon>
        <taxon>Pseudomonadati</taxon>
        <taxon>Thermodesulfobacteriota</taxon>
        <taxon>Desulfovibrionia</taxon>
        <taxon>Desulfovibrionales</taxon>
        <taxon>Desulfovibrionaceae</taxon>
        <taxon>Maridesulfovibrio</taxon>
    </lineage>
</organism>
<protein>
    <recommendedName>
        <fullName evidence="1">Phospho-N-acetylmuramoyl-pentapeptide-transferase</fullName>
        <ecNumber evidence="1">2.7.8.13</ecNumber>
    </recommendedName>
    <alternativeName>
        <fullName evidence="1">UDP-MurNAc-pentapeptide phosphotransferase</fullName>
    </alternativeName>
</protein>
<proteinExistence type="inferred from homology"/>
<feature type="chain" id="PRO_1000202063" description="Phospho-N-acetylmuramoyl-pentapeptide-transferase">
    <location>
        <begin position="1"/>
        <end position="359"/>
    </location>
</feature>
<feature type="transmembrane region" description="Helical" evidence="1">
    <location>
        <begin position="27"/>
        <end position="47"/>
    </location>
</feature>
<feature type="transmembrane region" description="Helical" evidence="1">
    <location>
        <begin position="73"/>
        <end position="93"/>
    </location>
</feature>
<feature type="transmembrane region" description="Helical" evidence="1">
    <location>
        <begin position="94"/>
        <end position="114"/>
    </location>
</feature>
<feature type="transmembrane region" description="Helical" evidence="1">
    <location>
        <begin position="134"/>
        <end position="154"/>
    </location>
</feature>
<feature type="transmembrane region" description="Helical" evidence="1">
    <location>
        <begin position="166"/>
        <end position="186"/>
    </location>
</feature>
<feature type="transmembrane region" description="Helical" evidence="1">
    <location>
        <begin position="197"/>
        <end position="217"/>
    </location>
</feature>
<feature type="transmembrane region" description="Helical" evidence="1">
    <location>
        <begin position="233"/>
        <end position="253"/>
    </location>
</feature>
<feature type="transmembrane region" description="Helical" evidence="1">
    <location>
        <begin position="261"/>
        <end position="281"/>
    </location>
</feature>
<feature type="transmembrane region" description="Helical" evidence="1">
    <location>
        <begin position="286"/>
        <end position="306"/>
    </location>
</feature>
<feature type="transmembrane region" description="Helical" evidence="1">
    <location>
        <begin position="336"/>
        <end position="356"/>
    </location>
</feature>
<keyword id="KW-0131">Cell cycle</keyword>
<keyword id="KW-0132">Cell division</keyword>
<keyword id="KW-0997">Cell inner membrane</keyword>
<keyword id="KW-1003">Cell membrane</keyword>
<keyword id="KW-0133">Cell shape</keyword>
<keyword id="KW-0961">Cell wall biogenesis/degradation</keyword>
<keyword id="KW-0460">Magnesium</keyword>
<keyword id="KW-0472">Membrane</keyword>
<keyword id="KW-0479">Metal-binding</keyword>
<keyword id="KW-0573">Peptidoglycan synthesis</keyword>
<keyword id="KW-1185">Reference proteome</keyword>
<keyword id="KW-0808">Transferase</keyword>
<keyword id="KW-0812">Transmembrane</keyword>
<keyword id="KW-1133">Transmembrane helix</keyword>
<evidence type="ECO:0000255" key="1">
    <source>
        <dbReference type="HAMAP-Rule" id="MF_00038"/>
    </source>
</evidence>
<accession>C6BYG9</accession>
<sequence>MIYHFLVPLSAQIGALNVFRYITFRSIYALLTALVITIVLGPMMMRWLQKIKCGQYIQDEVGELHKCKAGTPTMGGLLLGFGVLVSTLLWADLTNIYVWLTMLVFAGFGLVGFVDDYTKIRGKQNKGISPKAKLLGQLLVAGTAVGLLIMQPAYSTELAVPFFKNFTPDLGWMYLPFALLVMIGASNGVNLTDGLDGLAIGPSITSATCYAFFIYIAGHIGMANYLNVPHVPGVGEVTVFCGALVGAGLGFLWYNAYPAQLFMGDVGSLSIGGVLGFIAVLCKQELLLIIVGGVFVFETISVIMQVSYFKVSGGKRIFRMAPLHHHFEHKGVPESKIVIRFWVISILMALMALSTLKIR</sequence>
<gene>
    <name evidence="1" type="primary">mraY</name>
    <name type="ordered locus">Desal_0694</name>
</gene>
<comment type="function">
    <text evidence="1">Catalyzes the initial step of the lipid cycle reactions in the biosynthesis of the cell wall peptidoglycan: transfers peptidoglycan precursor phospho-MurNAc-pentapeptide from UDP-MurNAc-pentapeptide onto the lipid carrier undecaprenyl phosphate, yielding undecaprenyl-pyrophosphoryl-MurNAc-pentapeptide, known as lipid I.</text>
</comment>
<comment type="catalytic activity">
    <reaction evidence="1">
        <text>UDP-N-acetyl-alpha-D-muramoyl-L-alanyl-gamma-D-glutamyl-meso-2,6-diaminopimeloyl-D-alanyl-D-alanine + di-trans,octa-cis-undecaprenyl phosphate = di-trans,octa-cis-undecaprenyl diphospho-N-acetyl-alpha-D-muramoyl-L-alanyl-D-glutamyl-meso-2,6-diaminopimeloyl-D-alanyl-D-alanine + UMP</text>
        <dbReference type="Rhea" id="RHEA:28386"/>
        <dbReference type="ChEBI" id="CHEBI:57865"/>
        <dbReference type="ChEBI" id="CHEBI:60392"/>
        <dbReference type="ChEBI" id="CHEBI:61386"/>
        <dbReference type="ChEBI" id="CHEBI:61387"/>
        <dbReference type="EC" id="2.7.8.13"/>
    </reaction>
</comment>
<comment type="cofactor">
    <cofactor evidence="1">
        <name>Mg(2+)</name>
        <dbReference type="ChEBI" id="CHEBI:18420"/>
    </cofactor>
</comment>
<comment type="pathway">
    <text evidence="1">Cell wall biogenesis; peptidoglycan biosynthesis.</text>
</comment>
<comment type="subcellular location">
    <subcellularLocation>
        <location evidence="1">Cell inner membrane</location>
        <topology evidence="1">Multi-pass membrane protein</topology>
    </subcellularLocation>
</comment>
<comment type="similarity">
    <text evidence="1">Belongs to the glycosyltransferase 4 family. MraY subfamily.</text>
</comment>
<name>MRAY_MARSD</name>
<reference key="1">
    <citation type="submission" date="2009-06" db="EMBL/GenBank/DDBJ databases">
        <title>Complete sequence of Desulfovibrio salexigens DSM 2638.</title>
        <authorList>
            <consortium name="US DOE Joint Genome Institute"/>
            <person name="Lucas S."/>
            <person name="Copeland A."/>
            <person name="Lapidus A."/>
            <person name="Glavina del Rio T."/>
            <person name="Tice H."/>
            <person name="Bruce D."/>
            <person name="Goodwin L."/>
            <person name="Pitluck S."/>
            <person name="Munk A.C."/>
            <person name="Brettin T."/>
            <person name="Detter J.C."/>
            <person name="Han C."/>
            <person name="Tapia R."/>
            <person name="Larimer F."/>
            <person name="Land M."/>
            <person name="Hauser L."/>
            <person name="Kyrpides N."/>
            <person name="Anderson I."/>
            <person name="Wall J.D."/>
            <person name="Arkin A.P."/>
            <person name="Dehal P."/>
            <person name="Chivian D."/>
            <person name="Giles B."/>
            <person name="Hazen T.C."/>
        </authorList>
    </citation>
    <scope>NUCLEOTIDE SEQUENCE [LARGE SCALE GENOMIC DNA]</scope>
    <source>
        <strain>ATCC 14822 / DSM 2638 / NCIMB 8403 / VKM B-1763</strain>
    </source>
</reference>
<dbReference type="EC" id="2.7.8.13" evidence="1"/>
<dbReference type="EMBL" id="CP001649">
    <property type="protein sequence ID" value="ACS78760.1"/>
    <property type="molecule type" value="Genomic_DNA"/>
</dbReference>
<dbReference type="RefSeq" id="WP_015850579.1">
    <property type="nucleotide sequence ID" value="NC_012881.1"/>
</dbReference>
<dbReference type="SMR" id="C6BYG9"/>
<dbReference type="STRING" id="526222.Desal_0694"/>
<dbReference type="KEGG" id="dsa:Desal_0694"/>
<dbReference type="eggNOG" id="COG0472">
    <property type="taxonomic scope" value="Bacteria"/>
</dbReference>
<dbReference type="HOGENOM" id="CLU_023982_0_0_7"/>
<dbReference type="OrthoDB" id="9805475at2"/>
<dbReference type="UniPathway" id="UPA00219"/>
<dbReference type="Proteomes" id="UP000002601">
    <property type="component" value="Chromosome"/>
</dbReference>
<dbReference type="GO" id="GO:0005886">
    <property type="term" value="C:plasma membrane"/>
    <property type="evidence" value="ECO:0007669"/>
    <property type="project" value="UniProtKB-SubCell"/>
</dbReference>
<dbReference type="GO" id="GO:0046872">
    <property type="term" value="F:metal ion binding"/>
    <property type="evidence" value="ECO:0007669"/>
    <property type="project" value="UniProtKB-KW"/>
</dbReference>
<dbReference type="GO" id="GO:0008963">
    <property type="term" value="F:phospho-N-acetylmuramoyl-pentapeptide-transferase activity"/>
    <property type="evidence" value="ECO:0007669"/>
    <property type="project" value="UniProtKB-UniRule"/>
</dbReference>
<dbReference type="GO" id="GO:0051992">
    <property type="term" value="F:UDP-N-acetylmuramoyl-L-alanyl-D-glutamyl-meso-2,6-diaminopimelyl-D-alanyl-D-alanine:undecaprenyl-phosphate transferase activity"/>
    <property type="evidence" value="ECO:0007669"/>
    <property type="project" value="RHEA"/>
</dbReference>
<dbReference type="GO" id="GO:0051301">
    <property type="term" value="P:cell division"/>
    <property type="evidence" value="ECO:0007669"/>
    <property type="project" value="UniProtKB-KW"/>
</dbReference>
<dbReference type="GO" id="GO:0071555">
    <property type="term" value="P:cell wall organization"/>
    <property type="evidence" value="ECO:0007669"/>
    <property type="project" value="UniProtKB-KW"/>
</dbReference>
<dbReference type="GO" id="GO:0009252">
    <property type="term" value="P:peptidoglycan biosynthetic process"/>
    <property type="evidence" value="ECO:0007669"/>
    <property type="project" value="UniProtKB-UniRule"/>
</dbReference>
<dbReference type="GO" id="GO:0008360">
    <property type="term" value="P:regulation of cell shape"/>
    <property type="evidence" value="ECO:0007669"/>
    <property type="project" value="UniProtKB-KW"/>
</dbReference>
<dbReference type="CDD" id="cd06852">
    <property type="entry name" value="GT_MraY"/>
    <property type="match status" value="1"/>
</dbReference>
<dbReference type="HAMAP" id="MF_00038">
    <property type="entry name" value="MraY"/>
    <property type="match status" value="1"/>
</dbReference>
<dbReference type="InterPro" id="IPR000715">
    <property type="entry name" value="Glycosyl_transferase_4"/>
</dbReference>
<dbReference type="InterPro" id="IPR003524">
    <property type="entry name" value="PNAcMuramoyl-5peptid_Trfase"/>
</dbReference>
<dbReference type="InterPro" id="IPR018480">
    <property type="entry name" value="PNAcMuramoyl-5peptid_Trfase_CS"/>
</dbReference>
<dbReference type="NCBIfam" id="TIGR00445">
    <property type="entry name" value="mraY"/>
    <property type="match status" value="1"/>
</dbReference>
<dbReference type="PANTHER" id="PTHR22926">
    <property type="entry name" value="PHOSPHO-N-ACETYLMURAMOYL-PENTAPEPTIDE-TRANSFERASE"/>
    <property type="match status" value="1"/>
</dbReference>
<dbReference type="PANTHER" id="PTHR22926:SF5">
    <property type="entry name" value="PHOSPHO-N-ACETYLMURAMOYL-PENTAPEPTIDE-TRANSFERASE HOMOLOG"/>
    <property type="match status" value="1"/>
</dbReference>
<dbReference type="Pfam" id="PF00953">
    <property type="entry name" value="Glycos_transf_4"/>
    <property type="match status" value="1"/>
</dbReference>
<dbReference type="Pfam" id="PF10555">
    <property type="entry name" value="MraY_sig1"/>
    <property type="match status" value="1"/>
</dbReference>
<dbReference type="PROSITE" id="PS01348">
    <property type="entry name" value="MRAY_2"/>
    <property type="match status" value="1"/>
</dbReference>